<sequence>MAGTQDAPLEEILWRSPSHVQMMGGFLHSNNILFYFAESPFFDATSNNASLAIQANYNETFRHFVETREAFEGRLKTMQGLEFVVSYDPLQAAAQSNGQFAHEPSNIWVIHKQTRRKRPGLEDEVEVLSTFFVVGDCIYMAPSVASVVGNRILSAVTSLTNLMKTAASLPNFTPAHGHTYMPPVSKSTDTAQPSAQPSKENTPMPDADSTKASLVGGAQSTNAGSVFQHTRTLAESFSLLTQYGDEFMDENPLVGEPGSFIMSRNNEGAASKQPPVGTTRPGTVPVRAGTPQVKVDTPGKTPDKGLTPGPDENKLRKKKGKSGV</sequence>
<evidence type="ECO:0000250" key="1"/>
<evidence type="ECO:0000256" key="2">
    <source>
        <dbReference type="SAM" id="MobiDB-lite"/>
    </source>
</evidence>
<evidence type="ECO:0000305" key="3"/>
<feature type="chain" id="PRO_0000303052" description="Mediator of RNA polymerase II transcription subunit 6">
    <location>
        <begin position="1"/>
        <end position="324"/>
    </location>
</feature>
<feature type="region of interest" description="Disordered" evidence="2">
    <location>
        <begin position="172"/>
        <end position="217"/>
    </location>
</feature>
<feature type="region of interest" description="Disordered" evidence="2">
    <location>
        <begin position="254"/>
        <end position="324"/>
    </location>
</feature>
<feature type="compositionally biased region" description="Polar residues" evidence="2">
    <location>
        <begin position="185"/>
        <end position="201"/>
    </location>
</feature>
<feature type="compositionally biased region" description="Low complexity" evidence="2">
    <location>
        <begin position="274"/>
        <end position="287"/>
    </location>
</feature>
<feature type="compositionally biased region" description="Basic residues" evidence="2">
    <location>
        <begin position="315"/>
        <end position="324"/>
    </location>
</feature>
<name>MED6_ASPTN</name>
<accession>Q0CH76</accession>
<organism>
    <name type="scientific">Aspergillus terreus (strain NIH 2624 / FGSC A1156)</name>
    <dbReference type="NCBI Taxonomy" id="341663"/>
    <lineage>
        <taxon>Eukaryota</taxon>
        <taxon>Fungi</taxon>
        <taxon>Dikarya</taxon>
        <taxon>Ascomycota</taxon>
        <taxon>Pezizomycotina</taxon>
        <taxon>Eurotiomycetes</taxon>
        <taxon>Eurotiomycetidae</taxon>
        <taxon>Eurotiales</taxon>
        <taxon>Aspergillaceae</taxon>
        <taxon>Aspergillus</taxon>
        <taxon>Aspergillus subgen. Circumdati</taxon>
    </lineage>
</organism>
<dbReference type="EMBL" id="CH476603">
    <property type="protein sequence ID" value="EAU32350.1"/>
    <property type="status" value="ALT_SEQ"/>
    <property type="molecule type" value="Genomic_DNA"/>
</dbReference>
<dbReference type="RefSeq" id="XP_001209652.1">
    <property type="nucleotide sequence ID" value="XM_001209652.1"/>
</dbReference>
<dbReference type="SMR" id="Q0CH76"/>
<dbReference type="STRING" id="341663.Q0CH76"/>
<dbReference type="EnsemblFungi" id="EAU32350">
    <property type="protein sequence ID" value="EAU32350"/>
    <property type="gene ID" value="ATEG_06966"/>
</dbReference>
<dbReference type="GeneID" id="4319125"/>
<dbReference type="eggNOG" id="KOG1224">
    <property type="taxonomic scope" value="Eukaryota"/>
</dbReference>
<dbReference type="eggNOG" id="KOG3169">
    <property type="taxonomic scope" value="Eukaryota"/>
</dbReference>
<dbReference type="OrthoDB" id="64220at2759"/>
<dbReference type="Proteomes" id="UP000007963">
    <property type="component" value="Unassembled WGS sequence"/>
</dbReference>
<dbReference type="GO" id="GO:0016592">
    <property type="term" value="C:mediator complex"/>
    <property type="evidence" value="ECO:0007669"/>
    <property type="project" value="InterPro"/>
</dbReference>
<dbReference type="GO" id="GO:0003712">
    <property type="term" value="F:transcription coregulator activity"/>
    <property type="evidence" value="ECO:0007669"/>
    <property type="project" value="InterPro"/>
</dbReference>
<dbReference type="GO" id="GO:0006357">
    <property type="term" value="P:regulation of transcription by RNA polymerase II"/>
    <property type="evidence" value="ECO:0007669"/>
    <property type="project" value="InterPro"/>
</dbReference>
<dbReference type="FunFam" id="3.10.450.580:FF:000003">
    <property type="entry name" value="Mediator of RNA polymerase II transcription subunit 6"/>
    <property type="match status" value="1"/>
</dbReference>
<dbReference type="Gene3D" id="3.10.450.580">
    <property type="entry name" value="Mediator complex, subunit Med6"/>
    <property type="match status" value="1"/>
</dbReference>
<dbReference type="InterPro" id="IPR007018">
    <property type="entry name" value="Mediator_Med6"/>
</dbReference>
<dbReference type="InterPro" id="IPR016612">
    <property type="entry name" value="Mediator_Med6_fun"/>
</dbReference>
<dbReference type="InterPro" id="IPR038566">
    <property type="entry name" value="Mediator_Med6_sf"/>
</dbReference>
<dbReference type="PANTHER" id="PTHR13104">
    <property type="entry name" value="MED-6-RELATED"/>
    <property type="match status" value="1"/>
</dbReference>
<dbReference type="Pfam" id="PF04934">
    <property type="entry name" value="Med6"/>
    <property type="match status" value="1"/>
</dbReference>
<dbReference type="PIRSF" id="PIRSF013286">
    <property type="entry name" value="MED6_fungi"/>
    <property type="match status" value="1"/>
</dbReference>
<reference key="1">
    <citation type="submission" date="2005-09" db="EMBL/GenBank/DDBJ databases">
        <title>Annotation of the Aspergillus terreus NIH2624 genome.</title>
        <authorList>
            <person name="Birren B.W."/>
            <person name="Lander E.S."/>
            <person name="Galagan J.E."/>
            <person name="Nusbaum C."/>
            <person name="Devon K."/>
            <person name="Henn M."/>
            <person name="Ma L.-J."/>
            <person name="Jaffe D.B."/>
            <person name="Butler J."/>
            <person name="Alvarez P."/>
            <person name="Gnerre S."/>
            <person name="Grabherr M."/>
            <person name="Kleber M."/>
            <person name="Mauceli E.W."/>
            <person name="Brockman W."/>
            <person name="Rounsley S."/>
            <person name="Young S.K."/>
            <person name="LaButti K."/>
            <person name="Pushparaj V."/>
            <person name="DeCaprio D."/>
            <person name="Crawford M."/>
            <person name="Koehrsen M."/>
            <person name="Engels R."/>
            <person name="Montgomery P."/>
            <person name="Pearson M."/>
            <person name="Howarth C."/>
            <person name="Larson L."/>
            <person name="Luoma S."/>
            <person name="White J."/>
            <person name="Alvarado L."/>
            <person name="Kodira C.D."/>
            <person name="Zeng Q."/>
            <person name="Oleary S."/>
            <person name="Yandava C."/>
            <person name="Denning D.W."/>
            <person name="Nierman W.C."/>
            <person name="Milne T."/>
            <person name="Madden K."/>
        </authorList>
    </citation>
    <scope>NUCLEOTIDE SEQUENCE [LARGE SCALE GENOMIC DNA]</scope>
    <source>
        <strain>NIH 2624 / FGSC A1156</strain>
    </source>
</reference>
<comment type="function">
    <text evidence="1">Component of the Mediator complex, a coactivator involved in the regulated transcription of nearly all RNA polymerase II-dependent genes. Mediator functions as a bridge to convey information from gene-specific regulatory proteins to the basal RNA polymerase II transcription machinery. Mediator is recruited to promoters by direct interactions with regulatory proteins and serves as a scaffold for the assembly of a functional preinitiation complex with RNA polymerase II and the general transcription factors (By similarity).</text>
</comment>
<comment type="subunit">
    <text evidence="1">Component of the Mediator complex.</text>
</comment>
<comment type="subcellular location">
    <subcellularLocation>
        <location evidence="1">Nucleus</location>
    </subcellularLocation>
</comment>
<comment type="similarity">
    <text evidence="3">Belongs to the Mediator complex subunit 6 family.</text>
</comment>
<comment type="sequence caution" evidence="3">
    <conflict type="erroneous gene model prediction">
        <sequence resource="EMBL-CDS" id="EAU32350"/>
    </conflict>
</comment>
<keyword id="KW-0010">Activator</keyword>
<keyword id="KW-0539">Nucleus</keyword>
<keyword id="KW-1185">Reference proteome</keyword>
<keyword id="KW-0804">Transcription</keyword>
<keyword id="KW-0805">Transcription regulation</keyword>
<proteinExistence type="inferred from homology"/>
<gene>
    <name type="primary">med6</name>
    <name type="ORF">ATEG_06966</name>
</gene>
<protein>
    <recommendedName>
        <fullName>Mediator of RNA polymerase II transcription subunit 6</fullName>
    </recommendedName>
    <alternativeName>
        <fullName>Mediator complex subunit 6</fullName>
    </alternativeName>
</protein>